<proteinExistence type="evidence at protein level"/>
<name>DMDA_RUEPO</name>
<gene>
    <name evidence="5" type="primary">dmdA</name>
    <name type="ordered locus">SPO1913</name>
</gene>
<keyword id="KW-0489">Methyltransferase</keyword>
<keyword id="KW-1185">Reference proteome</keyword>
<keyword id="KW-0808">Transferase</keyword>
<feature type="chain" id="PRO_0000420617" description="Dimethylsulfoniopropionate demethylase DmdA">
    <location>
        <begin position="1"/>
        <end position="364"/>
    </location>
</feature>
<protein>
    <recommendedName>
        <fullName>Dimethylsulfoniopropionate demethylase DmdA</fullName>
        <ecNumber evidence="2">2.1.1.269</ecNumber>
    </recommendedName>
</protein>
<sequence length="364" mass="39895">MASIFPSRRVRRTPFSAGVEAAGVKGYTVYNHMLLPTVFDSLQADCAHLKEHVQVWDVACERQVSIQGPDALRLMKLISPRDMDRMADDQCYYVPTVDHRGGMLNDPVAVKLAADHYWLSLADGDLLQFGLGIAIARGFDVEIVEPDVSPLAVQGPRADDLMARVFGEAVRDIRFFRYKRLAFQGVELVVARSGWSKQGGFEIYVEGSELGMPLWNALFAAGADLNVRAGCPNNIERVESGLLSYGNDMTRENTPYECGLGKFCNSPEDYIGKAALAEQAKNGPARQIRALVIGGEIPPCQDAWPLLADGRQVGQVGSAIHSPEFGVNVAIGMVDRSHWAPGTGMEVETPDGMRPVTVREGFWR</sequence>
<dbReference type="EC" id="2.1.1.269" evidence="2"/>
<dbReference type="EMBL" id="CP000031">
    <property type="protein sequence ID" value="AAV95190.1"/>
    <property type="molecule type" value="Genomic_DNA"/>
</dbReference>
<dbReference type="RefSeq" id="WP_011047644.1">
    <property type="nucleotide sequence ID" value="NC_003911.12"/>
</dbReference>
<dbReference type="SMR" id="Q5LS57"/>
<dbReference type="STRING" id="246200.SPO1913"/>
<dbReference type="PaxDb" id="246200-SPO1913"/>
<dbReference type="KEGG" id="sil:SPO1913"/>
<dbReference type="eggNOG" id="COG0404">
    <property type="taxonomic scope" value="Bacteria"/>
</dbReference>
<dbReference type="HOGENOM" id="CLU_007884_10_2_5"/>
<dbReference type="OrthoDB" id="9772660at2"/>
<dbReference type="BioCyc" id="MetaCyc:MONOMER-14220"/>
<dbReference type="BRENDA" id="2.1.1.269">
    <property type="organism ID" value="8123"/>
</dbReference>
<dbReference type="Proteomes" id="UP000001023">
    <property type="component" value="Chromosome"/>
</dbReference>
<dbReference type="GO" id="GO:0008168">
    <property type="term" value="F:methyltransferase activity"/>
    <property type="evidence" value="ECO:0000314"/>
    <property type="project" value="UniProtKB"/>
</dbReference>
<dbReference type="GO" id="GO:0032259">
    <property type="term" value="P:methylation"/>
    <property type="evidence" value="ECO:0007669"/>
    <property type="project" value="UniProtKB-KW"/>
</dbReference>
<dbReference type="Gene3D" id="3.30.1360.120">
    <property type="entry name" value="Probable tRNA modification gtpase trme, domain 1"/>
    <property type="match status" value="1"/>
</dbReference>
<dbReference type="InterPro" id="IPR013977">
    <property type="entry name" value="GCST_C"/>
</dbReference>
<dbReference type="InterPro" id="IPR006222">
    <property type="entry name" value="GCV_T_N"/>
</dbReference>
<dbReference type="InterPro" id="IPR028896">
    <property type="entry name" value="GcvT/YgfZ/DmdA"/>
</dbReference>
<dbReference type="InterPro" id="IPR029043">
    <property type="entry name" value="GcvT/YgfZ_C"/>
</dbReference>
<dbReference type="InterPro" id="IPR027266">
    <property type="entry name" value="TrmE/GcvT_dom1"/>
</dbReference>
<dbReference type="NCBIfam" id="NF009133">
    <property type="entry name" value="PRK12486.1"/>
    <property type="match status" value="1"/>
</dbReference>
<dbReference type="PANTHER" id="PTHR43757">
    <property type="entry name" value="AMINOMETHYLTRANSFERASE"/>
    <property type="match status" value="1"/>
</dbReference>
<dbReference type="PANTHER" id="PTHR43757:SF2">
    <property type="entry name" value="AMINOMETHYLTRANSFERASE, MITOCHONDRIAL"/>
    <property type="match status" value="1"/>
</dbReference>
<dbReference type="Pfam" id="PF01571">
    <property type="entry name" value="GCV_T"/>
    <property type="match status" value="1"/>
</dbReference>
<dbReference type="Pfam" id="PF08669">
    <property type="entry name" value="GCV_T_C"/>
    <property type="match status" value="1"/>
</dbReference>
<dbReference type="PIRSF" id="PIRSF006487">
    <property type="entry name" value="GcvT"/>
    <property type="match status" value="1"/>
</dbReference>
<dbReference type="SUPFAM" id="SSF101790">
    <property type="entry name" value="Aminomethyltransferase beta-barrel domain"/>
    <property type="match status" value="1"/>
</dbReference>
<dbReference type="SUPFAM" id="SSF103025">
    <property type="entry name" value="Folate-binding domain"/>
    <property type="match status" value="1"/>
</dbReference>
<organism>
    <name type="scientific">Ruegeria pomeroyi (strain ATCC 700808 / DSM 15171 / DSS-3)</name>
    <name type="common">Silicibacter pomeroyi</name>
    <dbReference type="NCBI Taxonomy" id="246200"/>
    <lineage>
        <taxon>Bacteria</taxon>
        <taxon>Pseudomonadati</taxon>
        <taxon>Pseudomonadota</taxon>
        <taxon>Alphaproteobacteria</taxon>
        <taxon>Rhodobacterales</taxon>
        <taxon>Roseobacteraceae</taxon>
        <taxon>Ruegeria</taxon>
    </lineage>
</organism>
<evidence type="ECO:0000269" key="1">
    <source>
    </source>
</evidence>
<evidence type="ECO:0000269" key="2">
    <source>
    </source>
</evidence>
<evidence type="ECO:0000269" key="3">
    <source>
    </source>
</evidence>
<evidence type="ECO:0000269" key="4">
    <source>
    </source>
</evidence>
<evidence type="ECO:0000303" key="5">
    <source>
    </source>
</evidence>
<evidence type="ECO:0000305" key="6"/>
<evidence type="ECO:0000305" key="7">
    <source>
    </source>
</evidence>
<reference key="1">
    <citation type="journal article" date="2004" name="Nature">
        <title>Genome sequence of Silicibacter pomeroyi reveals adaptations to the marine environment.</title>
        <authorList>
            <person name="Moran M.A."/>
            <person name="Buchan A."/>
            <person name="Gonzalez J.M."/>
            <person name="Heidelberg J.F."/>
            <person name="Whitman W.B."/>
            <person name="Kiene R.P."/>
            <person name="Henriksen J.R."/>
            <person name="King G.M."/>
            <person name="Belas R."/>
            <person name="Fuqua C."/>
            <person name="Brinkac L.M."/>
            <person name="Lewis M."/>
            <person name="Johri S."/>
            <person name="Weaver B."/>
            <person name="Pai G."/>
            <person name="Eisen J.A."/>
            <person name="Rahe E."/>
            <person name="Sheldon W.M."/>
            <person name="Ye W."/>
            <person name="Miller T.R."/>
            <person name="Carlton J."/>
            <person name="Rasko D.A."/>
            <person name="Paulsen I.T."/>
            <person name="Ren Q."/>
            <person name="Daugherty S.C."/>
            <person name="DeBoy R.T."/>
            <person name="Dodson R.J."/>
            <person name="Durkin A.S."/>
            <person name="Madupu R."/>
            <person name="Nelson W.C."/>
            <person name="Sullivan S.A."/>
            <person name="Rosovitz M.J."/>
            <person name="Haft D.H."/>
            <person name="Selengut J."/>
            <person name="Ward N."/>
        </authorList>
    </citation>
    <scope>NUCLEOTIDE SEQUENCE [LARGE SCALE GENOMIC DNA]</scope>
    <source>
        <strain>ATCC 700808 / DSM 15171 / DSS-3</strain>
    </source>
</reference>
<reference key="2">
    <citation type="journal article" date="2014" name="Stand. Genomic Sci.">
        <title>An updated genome annotation for the model marine bacterium Ruegeria pomeroyi DSS-3.</title>
        <authorList>
            <person name="Rivers A.R."/>
            <person name="Smith C.B."/>
            <person name="Moran M.A."/>
        </authorList>
    </citation>
    <scope>GENOME REANNOTATION</scope>
    <source>
        <strain>ATCC 700808 / DSM 15171 / DSS-3</strain>
    </source>
</reference>
<reference key="3">
    <citation type="journal article" date="2006" name="Science">
        <title>Bacterial taxa that limit sulfur flux from the ocean.</title>
        <authorList>
            <person name="Howard E.C."/>
            <person name="Henriksen J.R."/>
            <person name="Buchan A."/>
            <person name="Reisch C.R."/>
            <person name="Burgmann H."/>
            <person name="Welsh R."/>
            <person name="Ye W."/>
            <person name="Gonzalez J.M."/>
            <person name="Mace K."/>
            <person name="Joye S.B."/>
            <person name="Kiene R.P."/>
            <person name="Whitman W.B."/>
            <person name="Moran M.A."/>
        </authorList>
    </citation>
    <scope>FUNCTION</scope>
    <scope>DISRUPTION PHENOTYPE</scope>
    <source>
        <strain>ATCC 700808 / DSM 15171 / DSS-3</strain>
    </source>
</reference>
<reference key="4">
    <citation type="journal article" date="2008" name="J. Bacteriol.">
        <title>Dimethylsulfoniopropionate-dependent demethylase (DmdA) from Pelagibacter ubique and Silicibacter pomeroyi.</title>
        <authorList>
            <person name="Reisch C.R."/>
            <person name="Moran M.A."/>
            <person name="Whitman W.B."/>
        </authorList>
    </citation>
    <scope>FUNCTION</scope>
    <scope>BIOPHYSICOCHEMICAL PROPERTIES</scope>
    <scope>CATALYTIC ACTIVITY</scope>
    <source>
        <strain>ATCC 700808 / DSM 15171 / DSS-3</strain>
    </source>
</reference>
<reference key="5">
    <citation type="journal article" date="2011" name="Nature">
        <title>Novel pathway for assimilation of dimethylsulphoniopropionate widespread in marine bacteria.</title>
        <authorList>
            <person name="Reisch C.R."/>
            <person name="Stoudemayer M.J."/>
            <person name="Varaljay V.A."/>
            <person name="Amster I.J."/>
            <person name="Moran M.A."/>
            <person name="Whitman W.B."/>
        </authorList>
    </citation>
    <scope>FUNCTION</scope>
    <scope>DISRUPTION PHENOTYPE</scope>
    <source>
        <strain>ATCC 700808 / DSM 15171 / DSS-3</strain>
    </source>
</reference>
<reference key="6">
    <citation type="journal article" date="2012" name="PLoS ONE">
        <title>The Ruegeria pomeroyi acuI gene has a role in DMSP catabolism and resembles yhdH of E. coli and other bacteria in conferring resistance to acrylate.</title>
        <authorList>
            <person name="Todd J.D."/>
            <person name="Curson A.R."/>
            <person name="Sullivan M.J."/>
            <person name="Kirkwood M."/>
            <person name="Johnston A.W."/>
        </authorList>
    </citation>
    <scope>FUNCTION</scope>
    <scope>INDUCTION</scope>
    <scope>DISRUPTION PHENOTYPE</scope>
    <source>
        <strain>ATCC 700808 / DSM 15171 / DSS-3</strain>
    </source>
</reference>
<accession>Q5LS57</accession>
<comment type="function">
    <text evidence="1 2 3 4">Involved in the assimilation of dimethylsulphoniopropionate (DMSP), an important compound in the fixation of carbon in marine phytoplankton, by mediating demethylation of dimethylsulfoniopropionate (DMSP) to methyl-mercaptopropionate (MMPA). The intracellular concentration of DMSP is estimated to be 70 mM.</text>
</comment>
<comment type="catalytic activity">
    <reaction evidence="2">
        <text>S,S-dimethyl-beta-propiothetin + (6S)-5,6,7,8-tetrahydrofolate = 3-(methylsulfanyl)propanoate + (6S)-5-methyl-5,6,7,8-tetrahydrofolate + H(+)</text>
        <dbReference type="Rhea" id="RHEA:35467"/>
        <dbReference type="ChEBI" id="CHEBI:15378"/>
        <dbReference type="ChEBI" id="CHEBI:16457"/>
        <dbReference type="ChEBI" id="CHEBI:18608"/>
        <dbReference type="ChEBI" id="CHEBI:49016"/>
        <dbReference type="ChEBI" id="CHEBI:57453"/>
        <dbReference type="EC" id="2.1.1.269"/>
    </reaction>
</comment>
<comment type="biophysicochemical properties">
    <kinetics>
        <KM evidence="2">0.26 mM for tetrahydrafolate</KM>
        <KM evidence="2">8.6 mM for dimethylsulfoniopropionate</KM>
        <Vmax evidence="2">0.0105 umol/min/mg enzyme</Vmax>
        <text>In extracts of strain DSS-3.</text>
    </kinetics>
    <phDependence>
        <text evidence="2">Optimum pH is 7.0-8.0.</text>
    </phDependence>
</comment>
<comment type="induction">
    <text evidence="4">By dimethylsulfoniopropionate (DMSP) and acrylate.</text>
</comment>
<comment type="disruption phenotype">
    <text evidence="1 3 4">Loss of DMSP demethylation to MMPA. 25-fold increased sensitivity to acrylate, growth is strongly inhibited by 20 mM dimethylsulfoniopropionate (DMSP). Disruption of this gene has a polar effect on acuI, the downstream gene, which accounts for the increased sensitivity. Dimethyl sulfide (DMS) production is enhanced.</text>
</comment>
<comment type="miscellaneous">
    <text evidence="7">DMSP is used as an intracellular osmolyte, predator deterrent and antioxidant.</text>
</comment>
<comment type="similarity">
    <text evidence="6">Belongs to the GcvT family. DmdA subfamily.</text>
</comment>